<comment type="function">
    <text evidence="1">This is one of the proteins that binds to the 5S RNA in the ribosome where it forms part of the central protuberance.</text>
</comment>
<comment type="subunit">
    <text evidence="1">Part of the 50S ribosomal subunit; part of the 5S rRNA/L5/L18/L25 subcomplex. Contacts the 5S rRNA. Binds to the 5S rRNA independently of L5 and L18.</text>
</comment>
<comment type="similarity">
    <text evidence="1">Belongs to the bacterial ribosomal protein bL25 family. CTC subfamily.</text>
</comment>
<protein>
    <recommendedName>
        <fullName evidence="1">Large ribosomal subunit protein bL25</fullName>
    </recommendedName>
    <alternativeName>
        <fullName evidence="2">50S ribosomal protein L25</fullName>
    </alternativeName>
    <alternativeName>
        <fullName evidence="1">General stress protein CTC</fullName>
    </alternativeName>
</protein>
<reference key="1">
    <citation type="journal article" date="2008" name="Foodborne Pathog. Dis.">
        <title>The complete genome sequence and analysis of the human pathogen Campylobacter lari.</title>
        <authorList>
            <person name="Miller W.G."/>
            <person name="Wang G."/>
            <person name="Binnewies T.T."/>
            <person name="Parker C.T."/>
        </authorList>
    </citation>
    <scope>NUCLEOTIDE SEQUENCE [LARGE SCALE GENOMIC DNA]</scope>
    <source>
        <strain>RM2100 / D67 / ATCC BAA-1060</strain>
    </source>
</reference>
<dbReference type="EMBL" id="CP000932">
    <property type="protein sequence ID" value="ACM64680.1"/>
    <property type="molecule type" value="Genomic_DNA"/>
</dbReference>
<dbReference type="RefSeq" id="WP_012662063.1">
    <property type="nucleotide sequence ID" value="NC_012039.1"/>
</dbReference>
<dbReference type="RefSeq" id="WP_012662064.1">
    <property type="nucleotide sequence ID" value="NC_012039.1"/>
</dbReference>
<dbReference type="SMR" id="B9KDP2"/>
<dbReference type="STRING" id="306263.Cla_1365"/>
<dbReference type="KEGG" id="cla:CLA_1365"/>
<dbReference type="PATRIC" id="fig|306263.5.peg.1351"/>
<dbReference type="eggNOG" id="COG1825">
    <property type="taxonomic scope" value="Bacteria"/>
</dbReference>
<dbReference type="HOGENOM" id="CLU_075939_2_2_7"/>
<dbReference type="Proteomes" id="UP000007727">
    <property type="component" value="Chromosome"/>
</dbReference>
<dbReference type="GO" id="GO:0022625">
    <property type="term" value="C:cytosolic large ribosomal subunit"/>
    <property type="evidence" value="ECO:0007669"/>
    <property type="project" value="TreeGrafter"/>
</dbReference>
<dbReference type="GO" id="GO:0008097">
    <property type="term" value="F:5S rRNA binding"/>
    <property type="evidence" value="ECO:0007669"/>
    <property type="project" value="InterPro"/>
</dbReference>
<dbReference type="GO" id="GO:0003735">
    <property type="term" value="F:structural constituent of ribosome"/>
    <property type="evidence" value="ECO:0007669"/>
    <property type="project" value="InterPro"/>
</dbReference>
<dbReference type="GO" id="GO:0006412">
    <property type="term" value="P:translation"/>
    <property type="evidence" value="ECO:0007669"/>
    <property type="project" value="UniProtKB-UniRule"/>
</dbReference>
<dbReference type="CDD" id="cd00495">
    <property type="entry name" value="Ribosomal_L25_TL5_CTC"/>
    <property type="match status" value="1"/>
</dbReference>
<dbReference type="Gene3D" id="2.170.120.20">
    <property type="entry name" value="Ribosomal protein L25, beta domain"/>
    <property type="match status" value="1"/>
</dbReference>
<dbReference type="Gene3D" id="2.40.240.10">
    <property type="entry name" value="Ribosomal Protein L25, Chain P"/>
    <property type="match status" value="1"/>
</dbReference>
<dbReference type="HAMAP" id="MF_01334">
    <property type="entry name" value="Ribosomal_bL25_CTC"/>
    <property type="match status" value="1"/>
</dbReference>
<dbReference type="InterPro" id="IPR020056">
    <property type="entry name" value="Rbsml_bL25/Gln-tRNA_synth_N"/>
</dbReference>
<dbReference type="InterPro" id="IPR011035">
    <property type="entry name" value="Ribosomal_bL25/Gln-tRNA_synth"/>
</dbReference>
<dbReference type="InterPro" id="IPR020057">
    <property type="entry name" value="Ribosomal_bL25_b-dom"/>
</dbReference>
<dbReference type="InterPro" id="IPR037121">
    <property type="entry name" value="Ribosomal_bL25_C"/>
</dbReference>
<dbReference type="InterPro" id="IPR001021">
    <property type="entry name" value="Ribosomal_bL25_long"/>
</dbReference>
<dbReference type="InterPro" id="IPR029751">
    <property type="entry name" value="Ribosomal_L25_dom"/>
</dbReference>
<dbReference type="InterPro" id="IPR020930">
    <property type="entry name" value="Ribosomal_uL5_bac-type"/>
</dbReference>
<dbReference type="NCBIfam" id="TIGR00731">
    <property type="entry name" value="bL25_bact_ctc"/>
    <property type="match status" value="1"/>
</dbReference>
<dbReference type="NCBIfam" id="NF004129">
    <property type="entry name" value="PRK05618.1-4"/>
    <property type="match status" value="1"/>
</dbReference>
<dbReference type="PANTHER" id="PTHR33284">
    <property type="entry name" value="RIBOSOMAL PROTEIN L25/GLN-TRNA SYNTHETASE, ANTI-CODON-BINDING DOMAIN-CONTAINING PROTEIN"/>
    <property type="match status" value="1"/>
</dbReference>
<dbReference type="PANTHER" id="PTHR33284:SF1">
    <property type="entry name" value="RIBOSOMAL PROTEIN L25_GLN-TRNA SYNTHETASE, ANTI-CODON-BINDING DOMAIN-CONTAINING PROTEIN"/>
    <property type="match status" value="1"/>
</dbReference>
<dbReference type="Pfam" id="PF01386">
    <property type="entry name" value="Ribosomal_L25p"/>
    <property type="match status" value="1"/>
</dbReference>
<dbReference type="Pfam" id="PF14693">
    <property type="entry name" value="Ribosomal_TL5_C"/>
    <property type="match status" value="1"/>
</dbReference>
<dbReference type="SUPFAM" id="SSF50715">
    <property type="entry name" value="Ribosomal protein L25-like"/>
    <property type="match status" value="1"/>
</dbReference>
<feature type="chain" id="PRO_1000166166" description="Large ribosomal subunit protein bL25">
    <location>
        <begin position="1"/>
        <end position="178"/>
    </location>
</feature>
<sequence length="178" mass="19504">MLEGIVRESIGRKAAKALKRDGYLIANIYGKGLENINAAFKINEFIKEVRKKTTLAFDVKVGGKVLNVVVVDYQKDPVTAELKHVDLKVAQKGVISKYMVPVKIVGTAMGLKNKGVLIQSKRRLKVKCAAENLPNYFELDVTKLDVGDALLVRDVVVPEGVTMVDADRVAVVGVEKAR</sequence>
<organism>
    <name type="scientific">Campylobacter lari (strain RM2100 / D67 / ATCC BAA-1060)</name>
    <dbReference type="NCBI Taxonomy" id="306263"/>
    <lineage>
        <taxon>Bacteria</taxon>
        <taxon>Pseudomonadati</taxon>
        <taxon>Campylobacterota</taxon>
        <taxon>Epsilonproteobacteria</taxon>
        <taxon>Campylobacterales</taxon>
        <taxon>Campylobacteraceae</taxon>
        <taxon>Campylobacter</taxon>
    </lineage>
</organism>
<name>RL25_CAMLR</name>
<accession>B9KDP2</accession>
<gene>
    <name evidence="1" type="primary">rplY</name>
    <name evidence="1" type="synonym">ctc</name>
    <name type="ordered locus">Cla_1365</name>
</gene>
<keyword id="KW-1185">Reference proteome</keyword>
<keyword id="KW-0687">Ribonucleoprotein</keyword>
<keyword id="KW-0689">Ribosomal protein</keyword>
<keyword id="KW-0694">RNA-binding</keyword>
<keyword id="KW-0699">rRNA-binding</keyword>
<evidence type="ECO:0000255" key="1">
    <source>
        <dbReference type="HAMAP-Rule" id="MF_01334"/>
    </source>
</evidence>
<evidence type="ECO:0000305" key="2"/>
<proteinExistence type="inferred from homology"/>